<accession>P44399</accession>
<feature type="chain" id="PRO_0000059425" description="L-fuculokinase">
    <location>
        <begin position="1"/>
        <end position="470"/>
    </location>
</feature>
<keyword id="KW-0067">ATP-binding</keyword>
<keyword id="KW-0119">Carbohydrate metabolism</keyword>
<keyword id="KW-0294">Fucose metabolism</keyword>
<keyword id="KW-0418">Kinase</keyword>
<keyword id="KW-0547">Nucleotide-binding</keyword>
<keyword id="KW-1185">Reference proteome</keyword>
<keyword id="KW-0808">Transferase</keyword>
<gene>
    <name evidence="1" type="primary">fucK</name>
    <name type="ordered locus">HI_0613</name>
</gene>
<evidence type="ECO:0000255" key="1">
    <source>
        <dbReference type="HAMAP-Rule" id="MF_00986"/>
    </source>
</evidence>
<reference key="1">
    <citation type="journal article" date="1995" name="Science">
        <title>Whole-genome random sequencing and assembly of Haemophilus influenzae Rd.</title>
        <authorList>
            <person name="Fleischmann R.D."/>
            <person name="Adams M.D."/>
            <person name="White O."/>
            <person name="Clayton R.A."/>
            <person name="Kirkness E.F."/>
            <person name="Kerlavage A.R."/>
            <person name="Bult C.J."/>
            <person name="Tomb J.-F."/>
            <person name="Dougherty B.A."/>
            <person name="Merrick J.M."/>
            <person name="McKenney K."/>
            <person name="Sutton G.G."/>
            <person name="FitzHugh W."/>
            <person name="Fields C.A."/>
            <person name="Gocayne J.D."/>
            <person name="Scott J.D."/>
            <person name="Shirley R."/>
            <person name="Liu L.-I."/>
            <person name="Glodek A."/>
            <person name="Kelley J.M."/>
            <person name="Weidman J.F."/>
            <person name="Phillips C.A."/>
            <person name="Spriggs T."/>
            <person name="Hedblom E."/>
            <person name="Cotton M.D."/>
            <person name="Utterback T.R."/>
            <person name="Hanna M.C."/>
            <person name="Nguyen D.T."/>
            <person name="Saudek D.M."/>
            <person name="Brandon R.C."/>
            <person name="Fine L.D."/>
            <person name="Fritchman J.L."/>
            <person name="Fuhrmann J.L."/>
            <person name="Geoghagen N.S.M."/>
            <person name="Gnehm C.L."/>
            <person name="McDonald L.A."/>
            <person name="Small K.V."/>
            <person name="Fraser C.M."/>
            <person name="Smith H.O."/>
            <person name="Venter J.C."/>
        </authorList>
    </citation>
    <scope>NUCLEOTIDE SEQUENCE [LARGE SCALE GENOMIC DNA]</scope>
    <source>
        <strain>ATCC 51907 / DSM 11121 / KW20 / Rd</strain>
    </source>
</reference>
<protein>
    <recommendedName>
        <fullName evidence="1">L-fuculokinase</fullName>
        <ecNumber evidence="1">2.7.1.51</ecNumber>
    </recommendedName>
    <alternativeName>
        <fullName evidence="1">L-fuculose kinase</fullName>
    </alternativeName>
</protein>
<organism>
    <name type="scientific">Haemophilus influenzae (strain ATCC 51907 / DSM 11121 / KW20 / Rd)</name>
    <dbReference type="NCBI Taxonomy" id="71421"/>
    <lineage>
        <taxon>Bacteria</taxon>
        <taxon>Pseudomonadati</taxon>
        <taxon>Pseudomonadota</taxon>
        <taxon>Gammaproteobacteria</taxon>
        <taxon>Pasteurellales</taxon>
        <taxon>Pasteurellaceae</taxon>
        <taxon>Haemophilus</taxon>
    </lineage>
</organism>
<dbReference type="EC" id="2.7.1.51" evidence="1"/>
<dbReference type="EMBL" id="L42023">
    <property type="protein sequence ID" value="AAC22272.1"/>
    <property type="molecule type" value="Genomic_DNA"/>
</dbReference>
<dbReference type="PIR" id="E64081">
    <property type="entry name" value="E64081"/>
</dbReference>
<dbReference type="RefSeq" id="NP_438771.1">
    <property type="nucleotide sequence ID" value="NC_000907.1"/>
</dbReference>
<dbReference type="SMR" id="P44399"/>
<dbReference type="STRING" id="71421.HI_0613"/>
<dbReference type="EnsemblBacteria" id="AAC22272">
    <property type="protein sequence ID" value="AAC22272"/>
    <property type="gene ID" value="HI_0613"/>
</dbReference>
<dbReference type="KEGG" id="hin:HI_0613"/>
<dbReference type="PATRIC" id="fig|71421.8.peg.637"/>
<dbReference type="eggNOG" id="COG1070">
    <property type="taxonomic scope" value="Bacteria"/>
</dbReference>
<dbReference type="HOGENOM" id="CLU_009281_11_2_6"/>
<dbReference type="OrthoDB" id="9805576at2"/>
<dbReference type="PhylomeDB" id="P44399"/>
<dbReference type="BioCyc" id="HINF71421:G1GJ1-634-MONOMER"/>
<dbReference type="UniPathway" id="UPA00563">
    <property type="reaction ID" value="UER00625"/>
</dbReference>
<dbReference type="Proteomes" id="UP000000579">
    <property type="component" value="Chromosome"/>
</dbReference>
<dbReference type="GO" id="GO:0005829">
    <property type="term" value="C:cytosol"/>
    <property type="evidence" value="ECO:0000318"/>
    <property type="project" value="GO_Central"/>
</dbReference>
<dbReference type="GO" id="GO:0005524">
    <property type="term" value="F:ATP binding"/>
    <property type="evidence" value="ECO:0007669"/>
    <property type="project" value="UniProtKB-UniRule"/>
</dbReference>
<dbReference type="GO" id="GO:0004370">
    <property type="term" value="F:glycerol kinase activity"/>
    <property type="evidence" value="ECO:0000318"/>
    <property type="project" value="GO_Central"/>
</dbReference>
<dbReference type="GO" id="GO:0008737">
    <property type="term" value="F:L-fuculokinase activity"/>
    <property type="evidence" value="ECO:0000318"/>
    <property type="project" value="GO_Central"/>
</dbReference>
<dbReference type="GO" id="GO:0042355">
    <property type="term" value="P:L-fucose catabolic process"/>
    <property type="evidence" value="ECO:0007669"/>
    <property type="project" value="UniProtKB-UniRule"/>
</dbReference>
<dbReference type="GO" id="GO:0019301">
    <property type="term" value="P:rhamnose catabolic process"/>
    <property type="evidence" value="ECO:0000318"/>
    <property type="project" value="GO_Central"/>
</dbReference>
<dbReference type="CDD" id="cd07773">
    <property type="entry name" value="ASKHA_NBD_FGGY_FK"/>
    <property type="match status" value="1"/>
</dbReference>
<dbReference type="Gene3D" id="3.30.420.40">
    <property type="match status" value="2"/>
</dbReference>
<dbReference type="HAMAP" id="MF_00986">
    <property type="entry name" value="Fuculokinase"/>
    <property type="match status" value="1"/>
</dbReference>
<dbReference type="InterPro" id="IPR043129">
    <property type="entry name" value="ATPase_NBD"/>
</dbReference>
<dbReference type="InterPro" id="IPR000577">
    <property type="entry name" value="Carb_kinase_FGGY"/>
</dbReference>
<dbReference type="InterPro" id="IPR018483">
    <property type="entry name" value="Carb_kinase_FGGY_CS"/>
</dbReference>
<dbReference type="InterPro" id="IPR018485">
    <property type="entry name" value="FGGY_C"/>
</dbReference>
<dbReference type="InterPro" id="IPR050406">
    <property type="entry name" value="FGGY_Carb_Kinase"/>
</dbReference>
<dbReference type="InterPro" id="IPR018484">
    <property type="entry name" value="FGGY_N"/>
</dbReference>
<dbReference type="InterPro" id="IPR013450">
    <property type="entry name" value="Fuculokinase"/>
</dbReference>
<dbReference type="NCBIfam" id="TIGR02628">
    <property type="entry name" value="fuculo_kin_coli"/>
    <property type="match status" value="1"/>
</dbReference>
<dbReference type="PANTHER" id="PTHR43095">
    <property type="entry name" value="SUGAR KINASE"/>
    <property type="match status" value="1"/>
</dbReference>
<dbReference type="PANTHER" id="PTHR43095:SF5">
    <property type="entry name" value="XYLULOSE KINASE"/>
    <property type="match status" value="1"/>
</dbReference>
<dbReference type="Pfam" id="PF02782">
    <property type="entry name" value="FGGY_C"/>
    <property type="match status" value="1"/>
</dbReference>
<dbReference type="Pfam" id="PF00370">
    <property type="entry name" value="FGGY_N"/>
    <property type="match status" value="1"/>
</dbReference>
<dbReference type="PIRSF" id="PIRSF000538">
    <property type="entry name" value="GlpK"/>
    <property type="match status" value="1"/>
</dbReference>
<dbReference type="SUPFAM" id="SSF53067">
    <property type="entry name" value="Actin-like ATPase domain"/>
    <property type="match status" value="2"/>
</dbReference>
<dbReference type="PROSITE" id="PS00933">
    <property type="entry name" value="FGGY_KINASES_1"/>
    <property type="match status" value="1"/>
</dbReference>
<dbReference type="PROSITE" id="PS00445">
    <property type="entry name" value="FGGY_KINASES_2"/>
    <property type="match status" value="1"/>
</dbReference>
<name>FUCK_HAEIN</name>
<proteinExistence type="inferred from homology"/>
<sequence>MAIALIFDCGATNLRTIAINEKGQILASHHLANNTKQGIESSDYHIWDIEEIWQKLTSCATQTLNQLMQQGIDLKDIVGISVTTFGVDGAPFDENDQQLYPIISWKCPRTIPVMENLSNQLDIKSLYQRNGIGQYSFNTLFKLHWLKTHKPDVFQKMAKFVFISSMLTQRLTGQFTTDHTMAGTSMMTNLTSGNWDPSILASLGLSNNHFPPMRYAGEKVGKLRTPLAQKWGLNPVPVISCGHDTQFAVFGSGAGLNQPVLSSGTWEILMARTQHAEPRFEFVSQGLTTEFDAQSNCFNPAVQWVGSGVIEWLGKLLFSDVYGSDHYYTTMIKEGEKAFNAGKRAVNFEGIFSQLGQGNISGLSMFATRGEIYVSALQHMANKLKNGLSVLHQVSQFQAKSLICVGGGSKNVLWNQIRANTLNLPIDVVDISESTVLGAAMFTFAGVGIYENVNAAQQAMQPTRKRIYPN</sequence>
<comment type="function">
    <text evidence="1">Catalyzes the phosphorylation of L-fuculose.</text>
</comment>
<comment type="catalytic activity">
    <reaction evidence="1">
        <text>L-fuculose + ATP = L-fuculose 1-phosphate + ADP + H(+)</text>
        <dbReference type="Rhea" id="RHEA:12376"/>
        <dbReference type="ChEBI" id="CHEBI:15378"/>
        <dbReference type="ChEBI" id="CHEBI:17617"/>
        <dbReference type="ChEBI" id="CHEBI:30616"/>
        <dbReference type="ChEBI" id="CHEBI:57846"/>
        <dbReference type="ChEBI" id="CHEBI:456216"/>
        <dbReference type="EC" id="2.7.1.51"/>
    </reaction>
</comment>
<comment type="cofactor">
    <cofactor evidence="1">
        <name>a divalent metal cation</name>
        <dbReference type="ChEBI" id="CHEBI:60240"/>
    </cofactor>
</comment>
<comment type="pathway">
    <text evidence="1">Carbohydrate degradation; L-fucose degradation; L-lactaldehyde and glycerone phosphate from L-fucose: step 2/3.</text>
</comment>
<comment type="similarity">
    <text evidence="1">Belongs to the FGGY kinase family.</text>
</comment>